<gene>
    <name evidence="1" type="primary">panD</name>
    <name type="ordered locus">HPAG1_0032</name>
</gene>
<keyword id="KW-0068">Autocatalytic cleavage</keyword>
<keyword id="KW-0963">Cytoplasm</keyword>
<keyword id="KW-0210">Decarboxylase</keyword>
<keyword id="KW-0456">Lyase</keyword>
<keyword id="KW-0566">Pantothenate biosynthesis</keyword>
<keyword id="KW-0670">Pyruvate</keyword>
<keyword id="KW-0704">Schiff base</keyword>
<keyword id="KW-0865">Zymogen</keyword>
<protein>
    <recommendedName>
        <fullName evidence="1">Aspartate 1-decarboxylase</fullName>
        <ecNumber evidence="1">4.1.1.11</ecNumber>
    </recommendedName>
    <alternativeName>
        <fullName evidence="1">Aspartate alpha-decarboxylase</fullName>
    </alternativeName>
    <component>
        <recommendedName>
            <fullName evidence="1">Aspartate 1-decarboxylase beta chain</fullName>
        </recommendedName>
    </component>
    <component>
        <recommendedName>
            <fullName evidence="1">Aspartate 1-decarboxylase alpha chain</fullName>
        </recommendedName>
    </component>
</protein>
<sequence>MTFEMLYSKIHRATITDANLNYIGSITIDEDLAKLAKLREGMKVEIVDVNNGERFSTYVILGKKRGEICVNGAAARKVAIGDVVIILAYASMNEDEINAHKPCIVLVDEKNEILEK</sequence>
<accession>Q1CVC3</accession>
<feature type="chain" id="PRO_0000306997" description="Aspartate 1-decarboxylase beta chain" evidence="1">
    <location>
        <begin position="1"/>
        <end position="24"/>
    </location>
</feature>
<feature type="chain" id="PRO_0000306998" description="Aspartate 1-decarboxylase alpha chain" evidence="1">
    <location>
        <begin position="25"/>
        <end position="116"/>
    </location>
</feature>
<feature type="active site" description="Schiff-base intermediate with substrate; via pyruvic acid" evidence="1">
    <location>
        <position position="25"/>
    </location>
</feature>
<feature type="active site" description="Proton donor" evidence="1">
    <location>
        <position position="58"/>
    </location>
</feature>
<feature type="binding site" evidence="1">
    <location>
        <position position="57"/>
    </location>
    <ligand>
        <name>substrate</name>
    </ligand>
</feature>
<feature type="binding site" evidence="1">
    <location>
        <begin position="72"/>
        <end position="74"/>
    </location>
    <ligand>
        <name>substrate</name>
    </ligand>
</feature>
<feature type="modified residue" description="Pyruvic acid (Ser)" evidence="1">
    <location>
        <position position="25"/>
    </location>
</feature>
<comment type="function">
    <text evidence="1">Catalyzes the pyruvoyl-dependent decarboxylation of aspartate to produce beta-alanine.</text>
</comment>
<comment type="catalytic activity">
    <reaction evidence="1">
        <text>L-aspartate + H(+) = beta-alanine + CO2</text>
        <dbReference type="Rhea" id="RHEA:19497"/>
        <dbReference type="ChEBI" id="CHEBI:15378"/>
        <dbReference type="ChEBI" id="CHEBI:16526"/>
        <dbReference type="ChEBI" id="CHEBI:29991"/>
        <dbReference type="ChEBI" id="CHEBI:57966"/>
        <dbReference type="EC" id="4.1.1.11"/>
    </reaction>
</comment>
<comment type="cofactor">
    <cofactor evidence="1">
        <name>pyruvate</name>
        <dbReference type="ChEBI" id="CHEBI:15361"/>
    </cofactor>
    <text evidence="1">Binds 1 pyruvoyl group covalently per subunit.</text>
</comment>
<comment type="pathway">
    <text evidence="1">Cofactor biosynthesis; (R)-pantothenate biosynthesis; beta-alanine from L-aspartate: step 1/1.</text>
</comment>
<comment type="subunit">
    <text evidence="1">Heterooctamer of four alpha and four beta subunits.</text>
</comment>
<comment type="subcellular location">
    <subcellularLocation>
        <location evidence="1">Cytoplasm</location>
    </subcellularLocation>
</comment>
<comment type="PTM">
    <text evidence="1">Is synthesized initially as an inactive proenzyme, which is activated by self-cleavage at a specific serine bond to produce a beta-subunit with a hydroxyl group at its C-terminus and an alpha-subunit with a pyruvoyl group at its N-terminus.</text>
</comment>
<comment type="similarity">
    <text evidence="1">Belongs to the PanD family.</text>
</comment>
<name>PAND_HELPH</name>
<evidence type="ECO:0000255" key="1">
    <source>
        <dbReference type="HAMAP-Rule" id="MF_00446"/>
    </source>
</evidence>
<reference key="1">
    <citation type="journal article" date="2006" name="Proc. Natl. Acad. Sci. U.S.A.">
        <title>The complete genome sequence of a chronic atrophic gastritis Helicobacter pylori strain: evolution during disease progression.</title>
        <authorList>
            <person name="Oh J.D."/>
            <person name="Kling-Baeckhed H."/>
            <person name="Giannakis M."/>
            <person name="Xu J."/>
            <person name="Fulton R.S."/>
            <person name="Fulton L.A."/>
            <person name="Cordum H.S."/>
            <person name="Wang C."/>
            <person name="Elliott G."/>
            <person name="Edwards J."/>
            <person name="Mardis E.R."/>
            <person name="Engstrand L.G."/>
            <person name="Gordon J.I."/>
        </authorList>
    </citation>
    <scope>NUCLEOTIDE SEQUENCE [LARGE SCALE GENOMIC DNA]</scope>
    <source>
        <strain>HPAG1</strain>
    </source>
</reference>
<dbReference type="EC" id="4.1.1.11" evidence="1"/>
<dbReference type="EMBL" id="CP000241">
    <property type="protein sequence ID" value="ABF84099.1"/>
    <property type="molecule type" value="Genomic_DNA"/>
</dbReference>
<dbReference type="RefSeq" id="WP_000142242.1">
    <property type="nucleotide sequence ID" value="NC_008086.1"/>
</dbReference>
<dbReference type="SMR" id="Q1CVC3"/>
<dbReference type="KEGG" id="hpa:HPAG1_0032"/>
<dbReference type="HOGENOM" id="CLU_115305_2_0_7"/>
<dbReference type="UniPathway" id="UPA00028">
    <property type="reaction ID" value="UER00002"/>
</dbReference>
<dbReference type="GO" id="GO:0005829">
    <property type="term" value="C:cytosol"/>
    <property type="evidence" value="ECO:0007669"/>
    <property type="project" value="TreeGrafter"/>
</dbReference>
<dbReference type="GO" id="GO:0004068">
    <property type="term" value="F:aspartate 1-decarboxylase activity"/>
    <property type="evidence" value="ECO:0007669"/>
    <property type="project" value="UniProtKB-UniRule"/>
</dbReference>
<dbReference type="GO" id="GO:0006523">
    <property type="term" value="P:alanine biosynthetic process"/>
    <property type="evidence" value="ECO:0007669"/>
    <property type="project" value="InterPro"/>
</dbReference>
<dbReference type="GO" id="GO:0015940">
    <property type="term" value="P:pantothenate biosynthetic process"/>
    <property type="evidence" value="ECO:0007669"/>
    <property type="project" value="UniProtKB-UniRule"/>
</dbReference>
<dbReference type="CDD" id="cd06919">
    <property type="entry name" value="Asp_decarbox"/>
    <property type="match status" value="1"/>
</dbReference>
<dbReference type="Gene3D" id="2.40.40.20">
    <property type="match status" value="1"/>
</dbReference>
<dbReference type="HAMAP" id="MF_00446">
    <property type="entry name" value="PanD"/>
    <property type="match status" value="1"/>
</dbReference>
<dbReference type="InterPro" id="IPR009010">
    <property type="entry name" value="Asp_de-COase-like_dom_sf"/>
</dbReference>
<dbReference type="InterPro" id="IPR003190">
    <property type="entry name" value="Asp_decarbox"/>
</dbReference>
<dbReference type="NCBIfam" id="TIGR00223">
    <property type="entry name" value="panD"/>
    <property type="match status" value="1"/>
</dbReference>
<dbReference type="PANTHER" id="PTHR21012">
    <property type="entry name" value="ASPARTATE 1-DECARBOXYLASE"/>
    <property type="match status" value="1"/>
</dbReference>
<dbReference type="PANTHER" id="PTHR21012:SF0">
    <property type="entry name" value="ASPARTATE 1-DECARBOXYLASE"/>
    <property type="match status" value="1"/>
</dbReference>
<dbReference type="Pfam" id="PF02261">
    <property type="entry name" value="Asp_decarbox"/>
    <property type="match status" value="1"/>
</dbReference>
<dbReference type="PIRSF" id="PIRSF006246">
    <property type="entry name" value="Asp_decarbox"/>
    <property type="match status" value="1"/>
</dbReference>
<dbReference type="SUPFAM" id="SSF50692">
    <property type="entry name" value="ADC-like"/>
    <property type="match status" value="1"/>
</dbReference>
<organism>
    <name type="scientific">Helicobacter pylori (strain HPAG1)</name>
    <dbReference type="NCBI Taxonomy" id="357544"/>
    <lineage>
        <taxon>Bacteria</taxon>
        <taxon>Pseudomonadati</taxon>
        <taxon>Campylobacterota</taxon>
        <taxon>Epsilonproteobacteria</taxon>
        <taxon>Campylobacterales</taxon>
        <taxon>Helicobacteraceae</taxon>
        <taxon>Helicobacter</taxon>
    </lineage>
</organism>
<proteinExistence type="inferred from homology"/>